<dbReference type="EMBL" id="CP000250">
    <property type="protein sequence ID" value="ABD06576.1"/>
    <property type="molecule type" value="Genomic_DNA"/>
</dbReference>
<dbReference type="RefSeq" id="WP_011440764.1">
    <property type="nucleotide sequence ID" value="NC_007778.1"/>
</dbReference>
<dbReference type="SMR" id="Q2IYY4"/>
<dbReference type="STRING" id="316058.RPB_1868"/>
<dbReference type="KEGG" id="rpb:RPB_1868"/>
<dbReference type="eggNOG" id="COG0830">
    <property type="taxonomic scope" value="Bacteria"/>
</dbReference>
<dbReference type="HOGENOM" id="CLU_049215_2_0_5"/>
<dbReference type="OrthoDB" id="9798772at2"/>
<dbReference type="Proteomes" id="UP000008809">
    <property type="component" value="Chromosome"/>
</dbReference>
<dbReference type="GO" id="GO:0005737">
    <property type="term" value="C:cytoplasm"/>
    <property type="evidence" value="ECO:0007669"/>
    <property type="project" value="UniProtKB-SubCell"/>
</dbReference>
<dbReference type="GO" id="GO:0016151">
    <property type="term" value="F:nickel cation binding"/>
    <property type="evidence" value="ECO:0007669"/>
    <property type="project" value="UniProtKB-UniRule"/>
</dbReference>
<dbReference type="Gene3D" id="1.10.4190.10">
    <property type="entry name" value="Urease accessory protein UreF"/>
    <property type="match status" value="1"/>
</dbReference>
<dbReference type="HAMAP" id="MF_01385">
    <property type="entry name" value="UreF"/>
    <property type="match status" value="1"/>
</dbReference>
<dbReference type="InterPro" id="IPR002639">
    <property type="entry name" value="UreF"/>
</dbReference>
<dbReference type="InterPro" id="IPR038277">
    <property type="entry name" value="UreF_sf"/>
</dbReference>
<dbReference type="PANTHER" id="PTHR33620">
    <property type="entry name" value="UREASE ACCESSORY PROTEIN F"/>
    <property type="match status" value="1"/>
</dbReference>
<dbReference type="PANTHER" id="PTHR33620:SF1">
    <property type="entry name" value="UREASE ACCESSORY PROTEIN F"/>
    <property type="match status" value="1"/>
</dbReference>
<dbReference type="Pfam" id="PF01730">
    <property type="entry name" value="UreF"/>
    <property type="match status" value="1"/>
</dbReference>
<dbReference type="PIRSF" id="PIRSF009467">
    <property type="entry name" value="Ureas_acces_UreF"/>
    <property type="match status" value="1"/>
</dbReference>
<sequence length="237" mass="24797">MPEATAGPLSAEQGASLYRLMTWLSPAFPVGAFSYSSGLEWAVEAGDVADAASLRDWLGAMLEHGAGFCDGVFLAQAYRAVEAGDDAALRDVAELAAAMVPSAERHLETTAQGKAFIEIVRHAWASDGLARAVGACNGALAYPVAVGLVSATHRVPLAATLHAFLHAVVSNWISAGARLVPLGQTDSQRLLAALEPAVIATGDRALRASLDDLGGATFRADLASLRHETQYTRLFRS</sequence>
<feature type="chain" id="PRO_0000344172" description="Urease accessory protein UreF">
    <location>
        <begin position="1"/>
        <end position="237"/>
    </location>
</feature>
<accession>Q2IYY4</accession>
<proteinExistence type="inferred from homology"/>
<name>UREF_RHOP2</name>
<comment type="function">
    <text evidence="1">Required for maturation of urease via the functional incorporation of the urease nickel metallocenter.</text>
</comment>
<comment type="subunit">
    <text evidence="1">UreD, UreF and UreG form a complex that acts as a GTP-hydrolysis-dependent molecular chaperone, activating the urease apoprotein by helping to assemble the nickel containing metallocenter of UreC. The UreE protein probably delivers the nickel.</text>
</comment>
<comment type="subcellular location">
    <subcellularLocation>
        <location evidence="1">Cytoplasm</location>
    </subcellularLocation>
</comment>
<comment type="similarity">
    <text evidence="1">Belongs to the UreF family.</text>
</comment>
<evidence type="ECO:0000255" key="1">
    <source>
        <dbReference type="HAMAP-Rule" id="MF_01385"/>
    </source>
</evidence>
<gene>
    <name evidence="1" type="primary">ureF</name>
    <name type="ordered locus">RPB_1868</name>
</gene>
<keyword id="KW-0143">Chaperone</keyword>
<keyword id="KW-0963">Cytoplasm</keyword>
<keyword id="KW-0996">Nickel insertion</keyword>
<keyword id="KW-1185">Reference proteome</keyword>
<reference key="1">
    <citation type="submission" date="2006-01" db="EMBL/GenBank/DDBJ databases">
        <title>Complete sequence of Rhodopseudomonas palustris HaA2.</title>
        <authorList>
            <consortium name="US DOE Joint Genome Institute"/>
            <person name="Copeland A."/>
            <person name="Lucas S."/>
            <person name="Lapidus A."/>
            <person name="Barry K."/>
            <person name="Detter J.C."/>
            <person name="Glavina T."/>
            <person name="Hammon N."/>
            <person name="Israni S."/>
            <person name="Pitluck S."/>
            <person name="Chain P."/>
            <person name="Malfatti S."/>
            <person name="Shin M."/>
            <person name="Vergez L."/>
            <person name="Schmutz J."/>
            <person name="Larimer F."/>
            <person name="Land M."/>
            <person name="Hauser L."/>
            <person name="Pelletier D.A."/>
            <person name="Kyrpides N."/>
            <person name="Anderson I."/>
            <person name="Oda Y."/>
            <person name="Harwood C.S."/>
            <person name="Richardson P."/>
        </authorList>
    </citation>
    <scope>NUCLEOTIDE SEQUENCE [LARGE SCALE GENOMIC DNA]</scope>
    <source>
        <strain>HaA2</strain>
    </source>
</reference>
<protein>
    <recommendedName>
        <fullName evidence="1">Urease accessory protein UreF</fullName>
    </recommendedName>
</protein>
<organism>
    <name type="scientific">Rhodopseudomonas palustris (strain HaA2)</name>
    <dbReference type="NCBI Taxonomy" id="316058"/>
    <lineage>
        <taxon>Bacteria</taxon>
        <taxon>Pseudomonadati</taxon>
        <taxon>Pseudomonadota</taxon>
        <taxon>Alphaproteobacteria</taxon>
        <taxon>Hyphomicrobiales</taxon>
        <taxon>Nitrobacteraceae</taxon>
        <taxon>Rhodopseudomonas</taxon>
    </lineage>
</organism>